<evidence type="ECO:0000255" key="1">
    <source>
        <dbReference type="HAMAP-Rule" id="MF_00420"/>
    </source>
</evidence>
<comment type="function">
    <text evidence="1">Part of the phosphoribosylformylglycinamidine synthase complex involved in the purines biosynthetic pathway. Catalyzes the ATP-dependent conversion of formylglycinamide ribonucleotide (FGAR) and glutamine to yield formylglycinamidine ribonucleotide (FGAM) and glutamate. The FGAM synthase complex is composed of three subunits. PurQ produces an ammonia molecule by converting glutamine to glutamate. PurL transfers the ammonia molecule to FGAR to form FGAM in an ATP-dependent manner. PurS interacts with PurQ and PurL and is thought to assist in the transfer of the ammonia molecule from PurQ to PurL.</text>
</comment>
<comment type="catalytic activity">
    <reaction evidence="1">
        <text>N(2)-formyl-N(1)-(5-phospho-beta-D-ribosyl)glycinamide + L-glutamine + ATP + H2O = 2-formamido-N(1)-(5-O-phospho-beta-D-ribosyl)acetamidine + L-glutamate + ADP + phosphate + H(+)</text>
        <dbReference type="Rhea" id="RHEA:17129"/>
        <dbReference type="ChEBI" id="CHEBI:15377"/>
        <dbReference type="ChEBI" id="CHEBI:15378"/>
        <dbReference type="ChEBI" id="CHEBI:29985"/>
        <dbReference type="ChEBI" id="CHEBI:30616"/>
        <dbReference type="ChEBI" id="CHEBI:43474"/>
        <dbReference type="ChEBI" id="CHEBI:58359"/>
        <dbReference type="ChEBI" id="CHEBI:147286"/>
        <dbReference type="ChEBI" id="CHEBI:147287"/>
        <dbReference type="ChEBI" id="CHEBI:456216"/>
        <dbReference type="EC" id="6.3.5.3"/>
    </reaction>
</comment>
<comment type="pathway">
    <text evidence="1">Purine metabolism; IMP biosynthesis via de novo pathway; 5-amino-1-(5-phospho-D-ribosyl)imidazole from N(2)-formyl-N(1)-(5-phospho-D-ribosyl)glycinamide: step 1/2.</text>
</comment>
<comment type="subunit">
    <text evidence="1">Monomer. Part of the FGAM synthase complex composed of 1 PurL, 1 PurQ and 2 PurS subunits.</text>
</comment>
<comment type="subcellular location">
    <subcellularLocation>
        <location evidence="1">Cytoplasm</location>
    </subcellularLocation>
</comment>
<comment type="similarity">
    <text evidence="1">Belongs to the FGAMS family.</text>
</comment>
<sequence>MKTIEPEVNLALAAEHGLNAEEYQKIQEVLGRTPTFTELGIFSVMWSEHCSYKNSIAVLKTLPREGEALLTGAGEENAGLVDIGDNLAVAFKIESHNHPSAVEPYQGAATGVGGIHRDIFTMGARPVASLNSLRFGSPKDPRVRYLVDGVVRGIGDYGNSFGVPTVGGEIYFEDCYTGNPLVNAMSVGIVEHHKTVSATAEGEGNPVLIVGSSTGRDGIHGATFASEDLSEASEDKRPSVQVGDPFAEKLLLEATLEAIATGYVAGLQDMGAAGITSSTSEMSARGIEKNGNGGITIDLDLVPAREAGMSAYEIMLSESQERMLIVAEKGHEDDIIAVYRKWDVQAVVVGTVTSDNHVKVLHHGELVADIPAESLVLGGGAPVYIREAVGKKPDTAPAALLPDAGLDLRALALELLKRPNIASKRWVYRQYDSMVQTNTVTPVGHTDAAVIRIRGTKKGLAMKTDCNSRYVYLNPLAGGRIAVAECARNIACSGARPLAITNCLNFGNPYKPEVYFQFKTSVQGMGDACRAFNTPVTGGNVSFYNESTHGGGRAAIYPTPTIGMIGLLDDIDNLVGSAFTTAGDAIILFGDPLLKLEGSEFQVMQYGTPGTDAPDIDLQHEKNLQDLLVTLAEQKLLHSAHDVSDGGLFVTLAEKAIMDESRQLGFQVDLEDCGSGPYRVQEQLFSEAQGRVVGTIAPDAARAVIEEAIRHSVPVRVIGQVVPADASLAVDGHETLRFTTEELTAAYYDALENALHLNELL</sequence>
<name>PURL_CHLL3</name>
<feature type="chain" id="PRO_0000236659" description="Phosphoribosylformylglycinamidine synthase subunit PurL">
    <location>
        <begin position="1"/>
        <end position="761"/>
    </location>
</feature>
<feature type="active site" evidence="1">
    <location>
        <position position="49"/>
    </location>
</feature>
<feature type="active site" description="Proton acceptor" evidence="1">
    <location>
        <position position="96"/>
    </location>
</feature>
<feature type="binding site" evidence="1">
    <location>
        <position position="52"/>
    </location>
    <ligand>
        <name>ATP</name>
        <dbReference type="ChEBI" id="CHEBI:30616"/>
    </ligand>
</feature>
<feature type="binding site" evidence="1">
    <location>
        <position position="92"/>
    </location>
    <ligand>
        <name>ATP</name>
        <dbReference type="ChEBI" id="CHEBI:30616"/>
    </ligand>
</feature>
<feature type="binding site" evidence="1">
    <location>
        <position position="94"/>
    </location>
    <ligand>
        <name>Mg(2+)</name>
        <dbReference type="ChEBI" id="CHEBI:18420"/>
        <label>1</label>
    </ligand>
</feature>
<feature type="binding site" evidence="1">
    <location>
        <begin position="95"/>
        <end position="98"/>
    </location>
    <ligand>
        <name>substrate</name>
    </ligand>
</feature>
<feature type="binding site" evidence="1">
    <location>
        <position position="117"/>
    </location>
    <ligand>
        <name>substrate</name>
    </ligand>
</feature>
<feature type="binding site" evidence="1">
    <location>
        <position position="118"/>
    </location>
    <ligand>
        <name>Mg(2+)</name>
        <dbReference type="ChEBI" id="CHEBI:18420"/>
        <label>2</label>
    </ligand>
</feature>
<feature type="binding site" evidence="1">
    <location>
        <position position="241"/>
    </location>
    <ligand>
        <name>substrate</name>
    </ligand>
</feature>
<feature type="binding site" evidence="1">
    <location>
        <position position="269"/>
    </location>
    <ligand>
        <name>Mg(2+)</name>
        <dbReference type="ChEBI" id="CHEBI:18420"/>
        <label>2</label>
    </ligand>
</feature>
<feature type="binding site" evidence="1">
    <location>
        <begin position="318"/>
        <end position="320"/>
    </location>
    <ligand>
        <name>substrate</name>
    </ligand>
</feature>
<feature type="binding site" evidence="1">
    <location>
        <position position="502"/>
    </location>
    <ligand>
        <name>ATP</name>
        <dbReference type="ChEBI" id="CHEBI:30616"/>
    </ligand>
</feature>
<feature type="binding site" evidence="1">
    <location>
        <position position="539"/>
    </location>
    <ligand>
        <name>ATP</name>
        <dbReference type="ChEBI" id="CHEBI:30616"/>
    </ligand>
</feature>
<feature type="binding site" evidence="1">
    <location>
        <position position="540"/>
    </location>
    <ligand>
        <name>Mg(2+)</name>
        <dbReference type="ChEBI" id="CHEBI:18420"/>
        <label>1</label>
    </ligand>
</feature>
<feature type="binding site" evidence="1">
    <location>
        <position position="542"/>
    </location>
    <ligand>
        <name>substrate</name>
    </ligand>
</feature>
<protein>
    <recommendedName>
        <fullName evidence="1">Phosphoribosylformylglycinamidine synthase subunit PurL</fullName>
        <shortName evidence="1">FGAM synthase</shortName>
        <ecNumber evidence="1">6.3.5.3</ecNumber>
    </recommendedName>
    <alternativeName>
        <fullName evidence="1">Formylglycinamide ribonucleotide amidotransferase subunit II</fullName>
        <shortName evidence="1">FGAR amidotransferase II</shortName>
        <shortName evidence="1">FGAR-AT II</shortName>
    </alternativeName>
    <alternativeName>
        <fullName evidence="1">Glutamine amidotransferase PurL</fullName>
    </alternativeName>
    <alternativeName>
        <fullName evidence="1">Phosphoribosylformylglycinamidine synthase subunit II</fullName>
    </alternativeName>
</protein>
<reference key="1">
    <citation type="submission" date="2005-08" db="EMBL/GenBank/DDBJ databases">
        <title>Complete sequence of Pelodictyon luteolum DSM 273.</title>
        <authorList>
            <consortium name="US DOE Joint Genome Institute"/>
            <person name="Copeland A."/>
            <person name="Lucas S."/>
            <person name="Lapidus A."/>
            <person name="Barry K."/>
            <person name="Detter J.C."/>
            <person name="Glavina T."/>
            <person name="Hammon N."/>
            <person name="Israni S."/>
            <person name="Pitluck S."/>
            <person name="Bryant D."/>
            <person name="Schmutz J."/>
            <person name="Larimer F."/>
            <person name="Land M."/>
            <person name="Kyrpides N."/>
            <person name="Ivanova N."/>
            <person name="Richardson P."/>
        </authorList>
    </citation>
    <scope>NUCLEOTIDE SEQUENCE [LARGE SCALE GENOMIC DNA]</scope>
    <source>
        <strain>DSM 273 / BCRC 81028 / 2530</strain>
    </source>
</reference>
<dbReference type="EC" id="6.3.5.3" evidence="1"/>
<dbReference type="EMBL" id="CP000096">
    <property type="protein sequence ID" value="ABB23951.1"/>
    <property type="molecule type" value="Genomic_DNA"/>
</dbReference>
<dbReference type="RefSeq" id="WP_011357823.1">
    <property type="nucleotide sequence ID" value="NC_007512.1"/>
</dbReference>
<dbReference type="SMR" id="Q3B3Y0"/>
<dbReference type="STRING" id="319225.Plut_1089"/>
<dbReference type="KEGG" id="plt:Plut_1089"/>
<dbReference type="eggNOG" id="COG0046">
    <property type="taxonomic scope" value="Bacteria"/>
</dbReference>
<dbReference type="HOGENOM" id="CLU_003100_0_1_10"/>
<dbReference type="OrthoDB" id="9804441at2"/>
<dbReference type="UniPathway" id="UPA00074">
    <property type="reaction ID" value="UER00128"/>
</dbReference>
<dbReference type="Proteomes" id="UP000002709">
    <property type="component" value="Chromosome"/>
</dbReference>
<dbReference type="GO" id="GO:0005737">
    <property type="term" value="C:cytoplasm"/>
    <property type="evidence" value="ECO:0007669"/>
    <property type="project" value="UniProtKB-SubCell"/>
</dbReference>
<dbReference type="GO" id="GO:0005524">
    <property type="term" value="F:ATP binding"/>
    <property type="evidence" value="ECO:0007669"/>
    <property type="project" value="UniProtKB-UniRule"/>
</dbReference>
<dbReference type="GO" id="GO:0000287">
    <property type="term" value="F:magnesium ion binding"/>
    <property type="evidence" value="ECO:0007669"/>
    <property type="project" value="UniProtKB-UniRule"/>
</dbReference>
<dbReference type="GO" id="GO:0004642">
    <property type="term" value="F:phosphoribosylformylglycinamidine synthase activity"/>
    <property type="evidence" value="ECO:0007669"/>
    <property type="project" value="UniProtKB-UniRule"/>
</dbReference>
<dbReference type="GO" id="GO:0006189">
    <property type="term" value="P:'de novo' IMP biosynthetic process"/>
    <property type="evidence" value="ECO:0007669"/>
    <property type="project" value="UniProtKB-UniRule"/>
</dbReference>
<dbReference type="CDD" id="cd02203">
    <property type="entry name" value="PurL_repeat1"/>
    <property type="match status" value="1"/>
</dbReference>
<dbReference type="CDD" id="cd02204">
    <property type="entry name" value="PurL_repeat2"/>
    <property type="match status" value="1"/>
</dbReference>
<dbReference type="FunFam" id="3.30.1330.10:FF:000004">
    <property type="entry name" value="Phosphoribosylformylglycinamidine synthase subunit PurL"/>
    <property type="match status" value="1"/>
</dbReference>
<dbReference type="Gene3D" id="3.90.650.10">
    <property type="entry name" value="PurM-like C-terminal domain"/>
    <property type="match status" value="2"/>
</dbReference>
<dbReference type="Gene3D" id="3.30.1330.10">
    <property type="entry name" value="PurM-like, N-terminal domain"/>
    <property type="match status" value="2"/>
</dbReference>
<dbReference type="HAMAP" id="MF_00420">
    <property type="entry name" value="PurL_2"/>
    <property type="match status" value="1"/>
</dbReference>
<dbReference type="InterPro" id="IPR010074">
    <property type="entry name" value="PRibForGlyAmidine_synth_PurL"/>
</dbReference>
<dbReference type="InterPro" id="IPR041609">
    <property type="entry name" value="PurL_linker"/>
</dbReference>
<dbReference type="InterPro" id="IPR010918">
    <property type="entry name" value="PurM-like_C_dom"/>
</dbReference>
<dbReference type="InterPro" id="IPR036676">
    <property type="entry name" value="PurM-like_C_sf"/>
</dbReference>
<dbReference type="InterPro" id="IPR016188">
    <property type="entry name" value="PurM-like_N"/>
</dbReference>
<dbReference type="InterPro" id="IPR036921">
    <property type="entry name" value="PurM-like_N_sf"/>
</dbReference>
<dbReference type="NCBIfam" id="TIGR01736">
    <property type="entry name" value="FGAM_synth_II"/>
    <property type="match status" value="1"/>
</dbReference>
<dbReference type="NCBIfam" id="NF002290">
    <property type="entry name" value="PRK01213.1"/>
    <property type="match status" value="1"/>
</dbReference>
<dbReference type="PANTHER" id="PTHR43555">
    <property type="entry name" value="PHOSPHORIBOSYLFORMYLGLYCINAMIDINE SYNTHASE SUBUNIT PURL"/>
    <property type="match status" value="1"/>
</dbReference>
<dbReference type="PANTHER" id="PTHR43555:SF1">
    <property type="entry name" value="PHOSPHORIBOSYLFORMYLGLYCINAMIDINE SYNTHASE SUBUNIT PURL"/>
    <property type="match status" value="1"/>
</dbReference>
<dbReference type="Pfam" id="PF00586">
    <property type="entry name" value="AIRS"/>
    <property type="match status" value="2"/>
</dbReference>
<dbReference type="Pfam" id="PF02769">
    <property type="entry name" value="AIRS_C"/>
    <property type="match status" value="2"/>
</dbReference>
<dbReference type="Pfam" id="PF18072">
    <property type="entry name" value="FGAR-AT_linker"/>
    <property type="match status" value="1"/>
</dbReference>
<dbReference type="PIRSF" id="PIRSF001587">
    <property type="entry name" value="FGAM_synthase_II"/>
    <property type="match status" value="1"/>
</dbReference>
<dbReference type="SUPFAM" id="SSF56042">
    <property type="entry name" value="PurM C-terminal domain-like"/>
    <property type="match status" value="2"/>
</dbReference>
<dbReference type="SUPFAM" id="SSF55326">
    <property type="entry name" value="PurM N-terminal domain-like"/>
    <property type="match status" value="2"/>
</dbReference>
<accession>Q3B3Y0</accession>
<gene>
    <name evidence="1" type="primary">purL</name>
    <name type="ordered locus">Plut_1089</name>
</gene>
<organism>
    <name type="scientific">Chlorobium luteolum (strain DSM 273 / BCRC 81028 / 2530)</name>
    <name type="common">Pelodictyon luteolum</name>
    <dbReference type="NCBI Taxonomy" id="319225"/>
    <lineage>
        <taxon>Bacteria</taxon>
        <taxon>Pseudomonadati</taxon>
        <taxon>Chlorobiota</taxon>
        <taxon>Chlorobiia</taxon>
        <taxon>Chlorobiales</taxon>
        <taxon>Chlorobiaceae</taxon>
        <taxon>Chlorobium/Pelodictyon group</taxon>
        <taxon>Pelodictyon</taxon>
    </lineage>
</organism>
<proteinExistence type="inferred from homology"/>
<keyword id="KW-0067">ATP-binding</keyword>
<keyword id="KW-0963">Cytoplasm</keyword>
<keyword id="KW-0436">Ligase</keyword>
<keyword id="KW-0460">Magnesium</keyword>
<keyword id="KW-0479">Metal-binding</keyword>
<keyword id="KW-0547">Nucleotide-binding</keyword>
<keyword id="KW-0658">Purine biosynthesis</keyword>
<keyword id="KW-1185">Reference proteome</keyword>